<reference key="1">
    <citation type="submission" date="2007-06" db="EMBL/GenBank/DDBJ databases">
        <authorList>
            <person name="Dodson R.J."/>
            <person name="Harkins D."/>
            <person name="Paulsen I.T."/>
        </authorList>
    </citation>
    <scope>NUCLEOTIDE SEQUENCE [LARGE SCALE GENOMIC DNA]</scope>
    <source>
        <strain>DSM 24068 / PA7</strain>
    </source>
</reference>
<proteinExistence type="inferred from homology"/>
<sequence length="535" mass="57634">MTDQTTRLPIRRALISVSDKTGVVDFARELVALGVEILSTGGTYKLLRDNGIAAVEVADYTGFPEMMDGRVKTLHPKVHGGILGRRDLDGAVMEQHGIKPIDLVAVNLYPFEATVARPDCDLPSAIENIDIGGPTMVRSAAKNHKDVAIVVNAGDYAAVVEALKAGGLTYAQRFDLALKAFEHTSAYDGMIANYLGTIDQTRDTLGTADRGAFPRTFNSQFVKAQEMRYGENPHQSAAFYVEAKKGEASVSTAIQLQGKELSFNNVADTDAALECVKSFLKPACVIVKHANPCGVAVVPEDEGGIRKAYDLAYATDSESAFGGIIAFNRELDGETARAIVERQFVEVIIAPKISAAAREVVAAKANVRLLECGEWPAERAPGWDFKRVNGGLLVQSRDIGMIKAEDLKIVTRRAPTEQEIHDLIFAWKVAKFVKSNAIVYARNRQTVGVGAGQMSRVNSARIAAIKAEHAGLEVKGAVMASDAFFPFRDGIDNAAKAGITAVIQPGGSMRDNEVIAAADEADIAMVFTGMRHFRH</sequence>
<evidence type="ECO:0000255" key="1">
    <source>
        <dbReference type="HAMAP-Rule" id="MF_00139"/>
    </source>
</evidence>
<evidence type="ECO:0000255" key="2">
    <source>
        <dbReference type="PROSITE-ProRule" id="PRU01202"/>
    </source>
</evidence>
<protein>
    <recommendedName>
        <fullName evidence="1">Bifunctional purine biosynthesis protein PurH</fullName>
    </recommendedName>
    <domain>
        <recommendedName>
            <fullName evidence="1">Phosphoribosylaminoimidazolecarboxamide formyltransferase</fullName>
            <ecNumber evidence="1">2.1.2.3</ecNumber>
        </recommendedName>
        <alternativeName>
            <fullName evidence="1">AICAR transformylase</fullName>
        </alternativeName>
    </domain>
    <domain>
        <recommendedName>
            <fullName evidence="1">IMP cyclohydrolase</fullName>
            <ecNumber evidence="1">3.5.4.10</ecNumber>
        </recommendedName>
        <alternativeName>
            <fullName evidence="1">ATIC</fullName>
        </alternativeName>
        <alternativeName>
            <fullName evidence="1">IMP synthase</fullName>
        </alternativeName>
        <alternativeName>
            <fullName evidence="1">Inosinicase</fullName>
        </alternativeName>
    </domain>
</protein>
<gene>
    <name evidence="1" type="primary">purH</name>
    <name type="ordered locus">PSPA7_5574</name>
</gene>
<comment type="catalytic activity">
    <reaction evidence="1">
        <text>(6R)-10-formyltetrahydrofolate + 5-amino-1-(5-phospho-beta-D-ribosyl)imidazole-4-carboxamide = 5-formamido-1-(5-phospho-D-ribosyl)imidazole-4-carboxamide + (6S)-5,6,7,8-tetrahydrofolate</text>
        <dbReference type="Rhea" id="RHEA:22192"/>
        <dbReference type="ChEBI" id="CHEBI:57453"/>
        <dbReference type="ChEBI" id="CHEBI:58467"/>
        <dbReference type="ChEBI" id="CHEBI:58475"/>
        <dbReference type="ChEBI" id="CHEBI:195366"/>
        <dbReference type="EC" id="2.1.2.3"/>
    </reaction>
</comment>
<comment type="catalytic activity">
    <reaction evidence="1">
        <text>IMP + H2O = 5-formamido-1-(5-phospho-D-ribosyl)imidazole-4-carboxamide</text>
        <dbReference type="Rhea" id="RHEA:18445"/>
        <dbReference type="ChEBI" id="CHEBI:15377"/>
        <dbReference type="ChEBI" id="CHEBI:58053"/>
        <dbReference type="ChEBI" id="CHEBI:58467"/>
        <dbReference type="EC" id="3.5.4.10"/>
    </reaction>
</comment>
<comment type="pathway">
    <text evidence="1">Purine metabolism; IMP biosynthesis via de novo pathway; 5-formamido-1-(5-phospho-D-ribosyl)imidazole-4-carboxamide from 5-amino-1-(5-phospho-D-ribosyl)imidazole-4-carboxamide (10-formyl THF route): step 1/1.</text>
</comment>
<comment type="pathway">
    <text evidence="1">Purine metabolism; IMP biosynthesis via de novo pathway; IMP from 5-formamido-1-(5-phospho-D-ribosyl)imidazole-4-carboxamide: step 1/1.</text>
</comment>
<comment type="domain">
    <text evidence="1">The IMP cyclohydrolase activity resides in the N-terminal region.</text>
</comment>
<comment type="similarity">
    <text evidence="1">Belongs to the PurH family.</text>
</comment>
<organism>
    <name type="scientific">Pseudomonas paraeruginosa (strain DSM 24068 / PA7)</name>
    <name type="common">Pseudomonas aeruginosa (strain PA7)</name>
    <dbReference type="NCBI Taxonomy" id="381754"/>
    <lineage>
        <taxon>Bacteria</taxon>
        <taxon>Pseudomonadati</taxon>
        <taxon>Pseudomonadota</taxon>
        <taxon>Gammaproteobacteria</taxon>
        <taxon>Pseudomonadales</taxon>
        <taxon>Pseudomonadaceae</taxon>
        <taxon>Pseudomonas</taxon>
        <taxon>Pseudomonas paraeruginosa</taxon>
    </lineage>
</organism>
<accession>A6VCW0</accession>
<feature type="chain" id="PRO_1000018935" description="Bifunctional purine biosynthesis protein PurH">
    <location>
        <begin position="1"/>
        <end position="535"/>
    </location>
</feature>
<feature type="domain" description="MGS-like" evidence="2">
    <location>
        <begin position="6"/>
        <end position="151"/>
    </location>
</feature>
<dbReference type="EC" id="2.1.2.3" evidence="1"/>
<dbReference type="EC" id="3.5.4.10" evidence="1"/>
<dbReference type="EMBL" id="CP000744">
    <property type="protein sequence ID" value="ABR82541.1"/>
    <property type="molecule type" value="Genomic_DNA"/>
</dbReference>
<dbReference type="RefSeq" id="WP_012077563.1">
    <property type="nucleotide sequence ID" value="NC_009656.1"/>
</dbReference>
<dbReference type="SMR" id="A6VCW0"/>
<dbReference type="KEGG" id="pap:PSPA7_5574"/>
<dbReference type="HOGENOM" id="CLU_016316_5_2_6"/>
<dbReference type="UniPathway" id="UPA00074">
    <property type="reaction ID" value="UER00133"/>
</dbReference>
<dbReference type="UniPathway" id="UPA00074">
    <property type="reaction ID" value="UER00135"/>
</dbReference>
<dbReference type="Proteomes" id="UP000001582">
    <property type="component" value="Chromosome"/>
</dbReference>
<dbReference type="GO" id="GO:0005829">
    <property type="term" value="C:cytosol"/>
    <property type="evidence" value="ECO:0007669"/>
    <property type="project" value="TreeGrafter"/>
</dbReference>
<dbReference type="GO" id="GO:0003937">
    <property type="term" value="F:IMP cyclohydrolase activity"/>
    <property type="evidence" value="ECO:0007669"/>
    <property type="project" value="UniProtKB-UniRule"/>
</dbReference>
<dbReference type="GO" id="GO:0004643">
    <property type="term" value="F:phosphoribosylaminoimidazolecarboxamide formyltransferase activity"/>
    <property type="evidence" value="ECO:0007669"/>
    <property type="project" value="UniProtKB-UniRule"/>
</dbReference>
<dbReference type="GO" id="GO:0006189">
    <property type="term" value="P:'de novo' IMP biosynthetic process"/>
    <property type="evidence" value="ECO:0007669"/>
    <property type="project" value="UniProtKB-UniRule"/>
</dbReference>
<dbReference type="CDD" id="cd01421">
    <property type="entry name" value="IMPCH"/>
    <property type="match status" value="1"/>
</dbReference>
<dbReference type="FunFam" id="3.40.140.20:FF:000001">
    <property type="entry name" value="Bifunctional purine biosynthesis protein PurH"/>
    <property type="match status" value="1"/>
</dbReference>
<dbReference type="FunFam" id="3.40.140.20:FF:000002">
    <property type="entry name" value="Bifunctional purine biosynthesis protein PurH"/>
    <property type="match status" value="1"/>
</dbReference>
<dbReference type="FunFam" id="3.40.50.1380:FF:000001">
    <property type="entry name" value="Bifunctional purine biosynthesis protein PurH"/>
    <property type="match status" value="1"/>
</dbReference>
<dbReference type="Gene3D" id="3.40.140.20">
    <property type="match status" value="2"/>
</dbReference>
<dbReference type="Gene3D" id="3.40.50.1380">
    <property type="entry name" value="Methylglyoxal synthase-like domain"/>
    <property type="match status" value="1"/>
</dbReference>
<dbReference type="HAMAP" id="MF_00139">
    <property type="entry name" value="PurH"/>
    <property type="match status" value="1"/>
</dbReference>
<dbReference type="InterPro" id="IPR024051">
    <property type="entry name" value="AICAR_Tfase_dup_dom_sf"/>
</dbReference>
<dbReference type="InterPro" id="IPR016193">
    <property type="entry name" value="Cytidine_deaminase-like"/>
</dbReference>
<dbReference type="InterPro" id="IPR011607">
    <property type="entry name" value="MGS-like_dom"/>
</dbReference>
<dbReference type="InterPro" id="IPR036914">
    <property type="entry name" value="MGS-like_dom_sf"/>
</dbReference>
<dbReference type="InterPro" id="IPR002695">
    <property type="entry name" value="PurH-like"/>
</dbReference>
<dbReference type="NCBIfam" id="NF002049">
    <property type="entry name" value="PRK00881.1"/>
    <property type="match status" value="1"/>
</dbReference>
<dbReference type="NCBIfam" id="TIGR00355">
    <property type="entry name" value="purH"/>
    <property type="match status" value="1"/>
</dbReference>
<dbReference type="PANTHER" id="PTHR11692:SF0">
    <property type="entry name" value="BIFUNCTIONAL PURINE BIOSYNTHESIS PROTEIN ATIC"/>
    <property type="match status" value="1"/>
</dbReference>
<dbReference type="PANTHER" id="PTHR11692">
    <property type="entry name" value="BIFUNCTIONAL PURINE BIOSYNTHESIS PROTEIN PURH"/>
    <property type="match status" value="1"/>
</dbReference>
<dbReference type="Pfam" id="PF01808">
    <property type="entry name" value="AICARFT_IMPCHas"/>
    <property type="match status" value="1"/>
</dbReference>
<dbReference type="Pfam" id="PF02142">
    <property type="entry name" value="MGS"/>
    <property type="match status" value="1"/>
</dbReference>
<dbReference type="PIRSF" id="PIRSF000414">
    <property type="entry name" value="AICARFT_IMPCHas"/>
    <property type="match status" value="1"/>
</dbReference>
<dbReference type="SMART" id="SM00798">
    <property type="entry name" value="AICARFT_IMPCHas"/>
    <property type="match status" value="1"/>
</dbReference>
<dbReference type="SMART" id="SM00851">
    <property type="entry name" value="MGS"/>
    <property type="match status" value="1"/>
</dbReference>
<dbReference type="SUPFAM" id="SSF53927">
    <property type="entry name" value="Cytidine deaminase-like"/>
    <property type="match status" value="1"/>
</dbReference>
<dbReference type="SUPFAM" id="SSF52335">
    <property type="entry name" value="Methylglyoxal synthase-like"/>
    <property type="match status" value="1"/>
</dbReference>
<dbReference type="PROSITE" id="PS51855">
    <property type="entry name" value="MGS"/>
    <property type="match status" value="1"/>
</dbReference>
<name>PUR9_PSEP7</name>
<keyword id="KW-0378">Hydrolase</keyword>
<keyword id="KW-0511">Multifunctional enzyme</keyword>
<keyword id="KW-0658">Purine biosynthesis</keyword>
<keyword id="KW-0808">Transferase</keyword>